<comment type="function">
    <text>Anchors the catalytic subunits of asymmetric AChE to the synaptic basal lamina.</text>
</comment>
<comment type="subunit">
    <text evidence="5">Homotrimer. Component of the asymmetric form of AChE, a disulfide-bonded oligomer composed of the collagenic subunits (Q) and a variable number of asymmetric catalytic subunits (T). The N-terminal of a collagenic subunit (Q) associates with the C-terminal of a catalytic subunit (T).</text>
</comment>
<comment type="interaction">
    <interactant intactId="EBI-1637847">
        <id>Q9Y215</id>
    </interactant>
    <interactant intactId="EBI-1637793">
        <id>P22303</id>
        <label>ACHE</label>
    </interactant>
    <organismsDiffer>false</organismsDiffer>
    <experiments>2</experiments>
</comment>
<comment type="interaction">
    <interactant intactId="EBI-1637847">
        <id>Q9Y215</id>
    </interactant>
    <interactant intactId="EBI-744081">
        <id>Q96EQ0</id>
        <label>SGTB</label>
    </interactant>
    <organismsDiffer>false</organismsDiffer>
    <experiments>3</experiments>
</comment>
<comment type="subcellular location">
    <subcellularLocation>
        <location>Synapse</location>
    </subcellularLocation>
</comment>
<comment type="alternative products">
    <event type="alternative splicing"/>
    <isoform>
        <id>Q9Y215-1</id>
        <name>I</name>
        <sequence type="displayed"/>
    </isoform>
    <isoform>
        <id>Q9Y215-2</id>
        <name>II</name>
        <sequence type="described" ref="VSP_001175"/>
    </isoform>
    <isoform>
        <id>Q9Y215-3</id>
        <name>III</name>
        <sequence type="described" ref="VSP_001177"/>
    </isoform>
    <isoform>
        <id>Q9Y215-4</id>
        <name>IV</name>
        <sequence type="described" ref="VSP_001176"/>
    </isoform>
    <isoform>
        <id>Q9Y215-5</id>
        <name>V</name>
        <sequence type="described" ref="VSP_001178"/>
    </isoform>
    <isoform>
        <id>Q9Y215-6</id>
        <name>VI</name>
        <sequence type="described" ref="VSP_001179 VSP_001183"/>
    </isoform>
    <isoform>
        <id>Q9Y215-7</id>
        <name>VII</name>
        <sequence type="described" ref="VSP_001180 VSP_001182"/>
    </isoform>
    <isoform>
        <id>Q9Y215-8</id>
        <name>VIII</name>
        <sequence type="described" ref="VSP_001181 VSP_001184"/>
    </isoform>
</comment>
<comment type="tissue specificity">
    <text>Found at the end plate of skeletal muscle.</text>
</comment>
<comment type="domain">
    <text>The proline-rich attachment domain (PRAD) binds the AChE catalytic subunits.</text>
</comment>
<comment type="PTM">
    <text>The triple-helical tail is stabilized by disulfide bonds at each end.</text>
</comment>
<comment type="disease" evidence="3 4 6 7">
    <disease id="DI-00366">
        <name>Myasthenic syndrome, congenital, 5</name>
        <acronym>CMS5</acronym>
        <description>A form of congenital myasthenic syndrome, a group of disorders characterized by failure of neuromuscular transmission, including pre-synaptic, synaptic, and post-synaptic disorders that are not of autoimmune origin. Clinical features are easy fatigability and muscle weakness affecting the axial and limb muscles (with hypotonia in early-onset forms), the ocular muscles (leading to ptosis and ophthalmoplegia), and the facial and bulbar musculature (affecting sucking and swallowing, and leading to dysphonia). The symptoms fluctuate and worsen with physical effort. CMS5 inheritance is autosomal recessive.</description>
        <dbReference type="MIM" id="603034"/>
    </disease>
    <text>The disease is caused by variants affecting the gene represented in this entry.</text>
</comment>
<comment type="miscellaneous">
    <molecule>Isoform VII</molecule>
    <text evidence="9">May be produced at very low levels due to a premature stop codon in the mRNA, leading to nonsense-mediated mRNA decay.</text>
</comment>
<comment type="similarity">
    <text evidence="9">Belongs to the COLQ family.</text>
</comment>
<protein>
    <recommendedName>
        <fullName>Acetylcholinesterase collagenic tail peptide</fullName>
    </recommendedName>
    <alternativeName>
        <fullName>AChE Q subunit</fullName>
    </alternativeName>
    <alternativeName>
        <fullName>Acetylcholinesterase-associated collagen</fullName>
    </alternativeName>
</protein>
<reference key="1">
    <citation type="journal article" date="1998" name="Am. J. Hum. Genet.">
        <title>Mutation in the human acetylcholinesterase-associated collagen gene, COLQ, is responsible for congenital myasthenic syndrome with end-plate acetylcholinesterase deficiency (Type Ic).</title>
        <authorList>
            <person name="Donger C."/>
            <person name="Krejci E."/>
            <person name="Serradell A.P."/>
            <person name="Eymard B."/>
            <person name="Bon S."/>
            <person name="Nicole S."/>
            <person name="Chateau D."/>
            <person name="Gary F."/>
            <person name="Fardeau M."/>
            <person name="Massoulie J."/>
            <person name="Guicheney P."/>
        </authorList>
    </citation>
    <scope>NUCLEOTIDE SEQUENCE [MRNA]</scope>
    <scope>VARIANT CMS5 SER-430</scope>
    <source>
        <tissue>Blood</tissue>
        <tissue>Skeletal muscle</tissue>
    </source>
</reference>
<reference key="2">
    <citation type="journal article" date="1998" name="Proc. Natl. Acad. Sci. U.S.A.">
        <title>Human endplate acetylcholinesterase deficiency caused by mutations in the collagen-like tail subunit (ColQ) of the asymmetric enzyme.</title>
        <authorList>
            <person name="Ohno K."/>
            <person name="Brengman J."/>
            <person name="Tsujino A."/>
            <person name="Engel A.G."/>
        </authorList>
    </citation>
    <scope>NUCLEOTIDE SEQUENCE [GENOMIC DNA / MRNA]</scope>
    <scope>ALTERNATIVE SPLICING</scope>
    <source>
        <tissue>Skeletal muscle</tissue>
    </source>
</reference>
<reference key="3">
    <citation type="submission" date="2002-09" db="EMBL/GenBank/DDBJ databases">
        <authorList>
            <person name="Arredondo J."/>
            <person name="DeLeon M."/>
        </authorList>
    </citation>
    <scope>NUCLEOTIDE SEQUENCE [MRNA]</scope>
</reference>
<reference key="4">
    <citation type="journal article" date="2004" name="Nat. Genet.">
        <title>Complete sequencing and characterization of 21,243 full-length human cDNAs.</title>
        <authorList>
            <person name="Ota T."/>
            <person name="Suzuki Y."/>
            <person name="Nishikawa T."/>
            <person name="Otsuki T."/>
            <person name="Sugiyama T."/>
            <person name="Irie R."/>
            <person name="Wakamatsu A."/>
            <person name="Hayashi K."/>
            <person name="Sato H."/>
            <person name="Nagai K."/>
            <person name="Kimura K."/>
            <person name="Makita H."/>
            <person name="Sekine M."/>
            <person name="Obayashi M."/>
            <person name="Nishi T."/>
            <person name="Shibahara T."/>
            <person name="Tanaka T."/>
            <person name="Ishii S."/>
            <person name="Yamamoto J."/>
            <person name="Saito K."/>
            <person name="Kawai Y."/>
            <person name="Isono Y."/>
            <person name="Nakamura Y."/>
            <person name="Nagahari K."/>
            <person name="Murakami K."/>
            <person name="Yasuda T."/>
            <person name="Iwayanagi T."/>
            <person name="Wagatsuma M."/>
            <person name="Shiratori A."/>
            <person name="Sudo H."/>
            <person name="Hosoiri T."/>
            <person name="Kaku Y."/>
            <person name="Kodaira H."/>
            <person name="Kondo H."/>
            <person name="Sugawara M."/>
            <person name="Takahashi M."/>
            <person name="Kanda K."/>
            <person name="Yokoi T."/>
            <person name="Furuya T."/>
            <person name="Kikkawa E."/>
            <person name="Omura Y."/>
            <person name="Abe K."/>
            <person name="Kamihara K."/>
            <person name="Katsuta N."/>
            <person name="Sato K."/>
            <person name="Tanikawa M."/>
            <person name="Yamazaki M."/>
            <person name="Ninomiya K."/>
            <person name="Ishibashi T."/>
            <person name="Yamashita H."/>
            <person name="Murakawa K."/>
            <person name="Fujimori K."/>
            <person name="Tanai H."/>
            <person name="Kimata M."/>
            <person name="Watanabe M."/>
            <person name="Hiraoka S."/>
            <person name="Chiba Y."/>
            <person name="Ishida S."/>
            <person name="Ono Y."/>
            <person name="Takiguchi S."/>
            <person name="Watanabe S."/>
            <person name="Yosida M."/>
            <person name="Hotuta T."/>
            <person name="Kusano J."/>
            <person name="Kanehori K."/>
            <person name="Takahashi-Fujii A."/>
            <person name="Hara H."/>
            <person name="Tanase T.-O."/>
            <person name="Nomura Y."/>
            <person name="Togiya S."/>
            <person name="Komai F."/>
            <person name="Hara R."/>
            <person name="Takeuchi K."/>
            <person name="Arita M."/>
            <person name="Imose N."/>
            <person name="Musashino K."/>
            <person name="Yuuki H."/>
            <person name="Oshima A."/>
            <person name="Sasaki N."/>
            <person name="Aotsuka S."/>
            <person name="Yoshikawa Y."/>
            <person name="Matsunawa H."/>
            <person name="Ichihara T."/>
            <person name="Shiohata N."/>
            <person name="Sano S."/>
            <person name="Moriya S."/>
            <person name="Momiyama H."/>
            <person name="Satoh N."/>
            <person name="Takami S."/>
            <person name="Terashima Y."/>
            <person name="Suzuki O."/>
            <person name="Nakagawa S."/>
            <person name="Senoh A."/>
            <person name="Mizoguchi H."/>
            <person name="Goto Y."/>
            <person name="Shimizu F."/>
            <person name="Wakebe H."/>
            <person name="Hishigaki H."/>
            <person name="Watanabe T."/>
            <person name="Sugiyama A."/>
            <person name="Takemoto M."/>
            <person name="Kawakami B."/>
            <person name="Yamazaki M."/>
            <person name="Watanabe K."/>
            <person name="Kumagai A."/>
            <person name="Itakura S."/>
            <person name="Fukuzumi Y."/>
            <person name="Fujimori Y."/>
            <person name="Komiyama M."/>
            <person name="Tashiro H."/>
            <person name="Tanigami A."/>
            <person name="Fujiwara T."/>
            <person name="Ono T."/>
            <person name="Yamada K."/>
            <person name="Fujii Y."/>
            <person name="Ozaki K."/>
            <person name="Hirao M."/>
            <person name="Ohmori Y."/>
            <person name="Kawabata A."/>
            <person name="Hikiji T."/>
            <person name="Kobatake N."/>
            <person name="Inagaki H."/>
            <person name="Ikema Y."/>
            <person name="Okamoto S."/>
            <person name="Okitani R."/>
            <person name="Kawakami T."/>
            <person name="Noguchi S."/>
            <person name="Itoh T."/>
            <person name="Shigeta K."/>
            <person name="Senba T."/>
            <person name="Matsumura K."/>
            <person name="Nakajima Y."/>
            <person name="Mizuno T."/>
            <person name="Morinaga M."/>
            <person name="Sasaki M."/>
            <person name="Togashi T."/>
            <person name="Oyama M."/>
            <person name="Hata H."/>
            <person name="Watanabe M."/>
            <person name="Komatsu T."/>
            <person name="Mizushima-Sugano J."/>
            <person name="Satoh T."/>
            <person name="Shirai Y."/>
            <person name="Takahashi Y."/>
            <person name="Nakagawa K."/>
            <person name="Okumura K."/>
            <person name="Nagase T."/>
            <person name="Nomura N."/>
            <person name="Kikuchi H."/>
            <person name="Masuho Y."/>
            <person name="Yamashita R."/>
            <person name="Nakai K."/>
            <person name="Yada T."/>
            <person name="Nakamura Y."/>
            <person name="Ohara O."/>
            <person name="Isogai T."/>
            <person name="Sugano S."/>
        </authorList>
    </citation>
    <scope>NUCLEOTIDE SEQUENCE [LARGE SCALE MRNA] (ISOFORM II)</scope>
    <source>
        <tissue>Thymus</tissue>
    </source>
</reference>
<reference key="5">
    <citation type="submission" date="2005-07" db="EMBL/GenBank/DDBJ databases">
        <authorList>
            <person name="Mural R.J."/>
            <person name="Istrail S."/>
            <person name="Sutton G.G."/>
            <person name="Florea L."/>
            <person name="Halpern A.L."/>
            <person name="Mobarry C.M."/>
            <person name="Lippert R."/>
            <person name="Walenz B."/>
            <person name="Shatkay H."/>
            <person name="Dew I."/>
            <person name="Miller J.R."/>
            <person name="Flanigan M.J."/>
            <person name="Edwards N.J."/>
            <person name="Bolanos R."/>
            <person name="Fasulo D."/>
            <person name="Halldorsson B.V."/>
            <person name="Hannenhalli S."/>
            <person name="Turner R."/>
            <person name="Yooseph S."/>
            <person name="Lu F."/>
            <person name="Nusskern D.R."/>
            <person name="Shue B.C."/>
            <person name="Zheng X.H."/>
            <person name="Zhong F."/>
            <person name="Delcher A.L."/>
            <person name="Huson D.H."/>
            <person name="Kravitz S.A."/>
            <person name="Mouchard L."/>
            <person name="Reinert K."/>
            <person name="Remington K.A."/>
            <person name="Clark A.G."/>
            <person name="Waterman M.S."/>
            <person name="Eichler E.E."/>
            <person name="Adams M.D."/>
            <person name="Hunkapiller M.W."/>
            <person name="Myers E.W."/>
            <person name="Venter J.C."/>
        </authorList>
    </citation>
    <scope>NUCLEOTIDE SEQUENCE [LARGE SCALE GENOMIC DNA]</scope>
</reference>
<reference key="6">
    <citation type="journal article" date="2004" name="Genome Res.">
        <title>The status, quality, and expansion of the NIH full-length cDNA project: the Mammalian Gene Collection (MGC).</title>
        <authorList>
            <consortium name="The MGC Project Team"/>
        </authorList>
    </citation>
    <scope>NUCLEOTIDE SEQUENCE [LARGE SCALE MRNA]</scope>
    <source>
        <tissue>Lung</tissue>
    </source>
</reference>
<reference key="7">
    <citation type="journal article" date="2002" name="Neurology">
        <title>Three novel COLQ mutations and variation of phenotypic expressivity due to G240X.</title>
        <authorList>
            <person name="Shapira Y.A."/>
            <person name="Sadeh M.E."/>
            <person name="Bergtraum M.P."/>
            <person name="Tsujino A."/>
            <person name="Ohno K."/>
            <person name="Shen X.M."/>
            <person name="Brengman J."/>
            <person name="Edwardson S."/>
            <person name="Matoth I."/>
            <person name="Engel A.G."/>
        </authorList>
    </citation>
    <scope>INVOLVEMENT IN CMS5</scope>
</reference>
<reference key="8">
    <citation type="journal article" date="2004" name="Genome Biol.">
        <title>An unappreciated role for RNA surveillance.</title>
        <authorList>
            <person name="Hillman R.T."/>
            <person name="Green R.E."/>
            <person name="Brenner S.E."/>
        </authorList>
    </citation>
    <scope>SPLICE ISOFORM(S) THAT ARE POTENTIAL NMD TARGET(S)</scope>
</reference>
<reference key="9">
    <citation type="journal article" date="2004" name="EMBO J.">
        <title>The synaptic acetylcholinesterase tetramer assembles around a polyproline II helix.</title>
        <authorList>
            <person name="Dvir H."/>
            <person name="Harel M."/>
            <person name="Bon S."/>
            <person name="Liu W.-Q."/>
            <person name="Vidal M."/>
            <person name="Garbay C."/>
            <person name="Sussman J.L."/>
            <person name="Massoulie J."/>
            <person name="Silman I."/>
        </authorList>
    </citation>
    <scope>X-RAY CRYSTALLOGRAPHY (2.35 ANGSTROMS) OF 53-67 IN COMPLEX WITH ACHE</scope>
</reference>
<reference key="10">
    <citation type="journal article" date="2000" name="Ann. Neurol.">
        <title>The spectrum of mutations causing end-plate acetylcholinesterase deficiency.</title>
        <authorList>
            <person name="Ohno K."/>
            <person name="Engel A.G."/>
            <person name="Brengman J.M."/>
            <person name="Shen X.-M."/>
            <person name="Heidenreich F."/>
            <person name="Vincent A."/>
            <person name="Milone M."/>
            <person name="Tan E."/>
            <person name="Demirci M."/>
            <person name="Walsh P."/>
            <person name="Nakano S."/>
            <person name="Akiguchi I."/>
        </authorList>
    </citation>
    <scope>VARIANTS CMS5 GLN-59; GLU-342; GLN-410 AND TYR-444</scope>
    <source>
        <tissue>Blood</tissue>
        <tissue>Muscle</tissue>
    </source>
</reference>
<reference key="11">
    <citation type="journal article" date="2014" name="Pediatr. Neurol.">
        <title>Clinical and molecular analysis of a novel COLQ missense mutation causing congenital myasthenic syndrome in a Syrian family.</title>
        <authorList>
            <person name="Matlik H.N."/>
            <person name="Milhem R.M."/>
            <person name="Saadeldin I.Y."/>
            <person name="Al-Jaibeji H.S."/>
            <person name="Al-Gazali L."/>
            <person name="Ali B.R."/>
        </authorList>
    </citation>
    <scope>VARIANT CMS5 THR-337</scope>
</reference>
<feature type="signal peptide" evidence="1">
    <location>
        <begin position="1"/>
        <end position="22"/>
    </location>
</feature>
<feature type="chain" id="PRO_0000005854" description="Acetylcholinesterase collagenic tail peptide">
    <location>
        <begin position="23"/>
        <end position="455"/>
    </location>
</feature>
<feature type="domain" description="Collagen-like 1">
    <location>
        <begin position="96"/>
        <end position="269"/>
    </location>
</feature>
<feature type="domain" description="Collagen-like 2">
    <location>
        <begin position="277"/>
        <end position="291"/>
    </location>
</feature>
<feature type="region of interest" description="PRAD">
    <location>
        <begin position="51"/>
        <end position="67"/>
    </location>
</feature>
<feature type="region of interest" description="Disordered" evidence="2">
    <location>
        <begin position="90"/>
        <end position="282"/>
    </location>
</feature>
<feature type="region of interest" description="Heparan sulfate proteoglycan binding" evidence="1">
    <location>
        <begin position="130"/>
        <end position="133"/>
    </location>
</feature>
<feature type="region of interest" description="Heparan sulfate proteoglycan binding" evidence="1">
    <location>
        <begin position="235"/>
        <end position="238"/>
    </location>
</feature>
<feature type="compositionally biased region" description="Pro residues" evidence="2">
    <location>
        <begin position="101"/>
        <end position="112"/>
    </location>
</feature>
<feature type="compositionally biased region" description="Basic and acidic residues" evidence="2">
    <location>
        <begin position="118"/>
        <end position="127"/>
    </location>
</feature>
<feature type="compositionally biased region" description="Pro residues" evidence="2">
    <location>
        <begin position="134"/>
        <end position="152"/>
    </location>
</feature>
<feature type="compositionally biased region" description="Basic and acidic residues" evidence="2">
    <location>
        <begin position="182"/>
        <end position="200"/>
    </location>
</feature>
<feature type="compositionally biased region" description="Pro residues" evidence="2">
    <location>
        <begin position="262"/>
        <end position="271"/>
    </location>
</feature>
<feature type="disulfide bond" description="Interchain (with T subunit)" evidence="1">
    <location>
        <position position="51"/>
    </location>
</feature>
<feature type="disulfide bond" description="Interchain (with T subunit)" evidence="1">
    <location>
        <position position="52"/>
    </location>
</feature>
<feature type="disulfide bond" description="Interchain" evidence="1">
    <location>
        <position position="93"/>
    </location>
</feature>
<feature type="disulfide bond" description="Interchain" evidence="1">
    <location>
        <position position="291"/>
    </location>
</feature>
<feature type="disulfide bond" description="Interchain" evidence="1">
    <location>
        <position position="293"/>
    </location>
</feature>
<feature type="splice variant" id="VSP_001175" description="In isoform II." evidence="8">
    <original>MVVLNPMTLGIYLQLFFLSIVSQPTFINSVLPISA</original>
    <variation>MTGSSFSLAHLLIISGLLCYSAGCL</variation>
    <location>
        <begin position="1"/>
        <end position="35"/>
    </location>
</feature>
<feature type="splice variant" id="VSP_001176" description="In isoform IV." evidence="9">
    <location>
        <begin position="73"/>
        <end position="76"/>
    </location>
</feature>
<feature type="splice variant" id="VSP_001177" description="In isoform III." evidence="9">
    <location>
        <begin position="74"/>
        <end position="107"/>
    </location>
</feature>
<feature type="splice variant" id="VSP_001178" description="In isoform V." evidence="9">
    <location>
        <begin position="124"/>
        <end position="132"/>
    </location>
</feature>
<feature type="splice variant" id="VSP_001179" description="In isoform VI." evidence="9">
    <original>GQKGDSGVMGPPGKPGPSGQPGRPGPPGPPPAGQLIMGPKGERGFPGPPGRC</original>
    <variation>SSRTPCTLPRRPPVPCGQGSRSPVTVVAGNESQACLLPRFEEDYISSGTERG</variation>
    <location>
        <begin position="240"/>
        <end position="291"/>
    </location>
</feature>
<feature type="splice variant" id="VSP_001180" description="In isoform VII." evidence="9">
    <original>GQLIMGPKGE</original>
    <variation>DFCGQQPGGA</variation>
    <location>
        <begin position="272"/>
        <end position="281"/>
    </location>
</feature>
<feature type="splice variant" id="VSP_001181" description="In isoform VIII." evidence="9">
    <original>QLIMGPKGERGFPGPPGRCLCGPTMNVNNPSYGESVYGPSSPRVPVIFVVNNQEELE</original>
    <variation>HMETCNAPSTATSTPRPAATSPEGREEKVGCAPQNWQQLLHCHQTGHVLAPSPPTFV</variation>
    <location>
        <begin position="273"/>
        <end position="329"/>
    </location>
</feature>
<feature type="splice variant" id="VSP_001182" description="In isoform VII." evidence="9">
    <location>
        <begin position="282"/>
        <end position="455"/>
    </location>
</feature>
<feature type="splice variant" id="VSP_001183" description="In isoform VI." evidence="9">
    <location>
        <begin position="292"/>
        <end position="455"/>
    </location>
</feature>
<feature type="splice variant" id="VSP_001184" description="In isoform VIII." evidence="9">
    <location>
        <begin position="330"/>
        <end position="455"/>
    </location>
</feature>
<feature type="sequence variant" id="VAR_010133" description="In CMS5; abrogates binding to T subunit." evidence="3">
    <original>P</original>
    <variation>Q</variation>
    <location>
        <position position="59"/>
    </location>
</feature>
<feature type="sequence variant" id="VAR_048809" description="In dbSNP:rs6782980.">
    <original>S</original>
    <variation>G</variation>
    <location>
        <position position="312"/>
    </location>
</feature>
<feature type="sequence variant" id="VAR_071710" description="In CMS5; dbSNP:rs1057521153." evidence="6">
    <original>I</original>
    <variation>T</variation>
    <location>
        <position position="337"/>
    </location>
</feature>
<feature type="sequence variant" id="VAR_010134" description="In CMS5; impairs anchoring to the basal lamina; dbSNP:rs758554049." evidence="3">
    <original>D</original>
    <variation>E</variation>
    <location>
        <position position="342"/>
    </location>
</feature>
<feature type="sequence variant" id="VAR_010135" description="In CMS5; dbSNP:rs1025361623." evidence="3">
    <original>R</original>
    <variation>Q</variation>
    <location>
        <position position="410"/>
    </location>
</feature>
<feature type="sequence variant" id="VAR_010136" description="In CMS5; dbSNP:rs121908923." evidence="7">
    <original>Y</original>
    <variation>S</variation>
    <location>
        <position position="430"/>
    </location>
</feature>
<feature type="sequence variant" id="VAR_010137" description="In CMS5; dbSNP:rs2125077465." evidence="3">
    <original>C</original>
    <variation>Y</variation>
    <location>
        <position position="444"/>
    </location>
</feature>
<feature type="sequence conflict" description="In Ref. 3; AAO06818." evidence="9" ref="3">
    <original>D</original>
    <variation>N</variation>
    <location>
        <position position="370"/>
    </location>
</feature>
<feature type="sequence conflict" description="In Ref. 1; CAA12648 and 3; AAO06814/AAO06816/AAO06817/AAO06818/AAO06819." evidence="9" ref="1 3">
    <original>R</original>
    <variation>RD</variation>
    <location>
        <position position="399"/>
    </location>
</feature>
<feature type="sequence conflict" description="In Ref. 3; AAO06816." evidence="9" ref="3">
    <original>C</original>
    <variation>Y</variation>
    <location>
        <position position="400"/>
    </location>
</feature>
<feature type="sequence conflict" description="In Ref. 3; AAO06817." evidence="9" ref="3">
    <original>Y</original>
    <variation>D</variation>
    <location>
        <position position="404"/>
    </location>
</feature>
<feature type="sequence conflict" description="In Ref. 3; AAO06819." evidence="9" ref="3">
    <original>G</original>
    <variation>V</variation>
    <location>
        <position position="423"/>
    </location>
</feature>
<keyword id="KW-0002">3D-structure</keyword>
<keyword id="KW-0025">Alternative splicing</keyword>
<keyword id="KW-0176">Collagen</keyword>
<keyword id="KW-1004">Congenital myasthenic syndrome</keyword>
<keyword id="KW-0225">Disease variant</keyword>
<keyword id="KW-1015">Disulfide bond</keyword>
<keyword id="KW-0531">Neurotransmitter degradation</keyword>
<keyword id="KW-1267">Proteomics identification</keyword>
<keyword id="KW-1185">Reference proteome</keyword>
<keyword id="KW-0677">Repeat</keyword>
<keyword id="KW-0732">Signal</keyword>
<keyword id="KW-0770">Synapse</keyword>
<evidence type="ECO:0000255" key="1"/>
<evidence type="ECO:0000256" key="2">
    <source>
        <dbReference type="SAM" id="MobiDB-lite"/>
    </source>
</evidence>
<evidence type="ECO:0000269" key="3">
    <source>
    </source>
</evidence>
<evidence type="ECO:0000269" key="4">
    <source>
    </source>
</evidence>
<evidence type="ECO:0000269" key="5">
    <source>
    </source>
</evidence>
<evidence type="ECO:0000269" key="6">
    <source>
    </source>
</evidence>
<evidence type="ECO:0000269" key="7">
    <source>
    </source>
</evidence>
<evidence type="ECO:0000303" key="8">
    <source>
    </source>
</evidence>
<evidence type="ECO:0000305" key="9"/>
<organism>
    <name type="scientific">Homo sapiens</name>
    <name type="common">Human</name>
    <dbReference type="NCBI Taxonomy" id="9606"/>
    <lineage>
        <taxon>Eukaryota</taxon>
        <taxon>Metazoa</taxon>
        <taxon>Chordata</taxon>
        <taxon>Craniata</taxon>
        <taxon>Vertebrata</taxon>
        <taxon>Euteleostomi</taxon>
        <taxon>Mammalia</taxon>
        <taxon>Eutheria</taxon>
        <taxon>Euarchontoglires</taxon>
        <taxon>Primates</taxon>
        <taxon>Haplorrhini</taxon>
        <taxon>Catarrhini</taxon>
        <taxon>Hominidae</taxon>
        <taxon>Homo</taxon>
    </lineage>
</organism>
<proteinExistence type="evidence at protein level"/>
<name>COLQ_HUMAN</name>
<accession>Q9Y215</accession>
<accession>B3KY09</accession>
<accession>Q6DK18</accession>
<accession>Q6YH18</accession>
<accession>Q6YH19</accession>
<accession>Q6YH20</accession>
<accession>Q6YH21</accession>
<accession>Q9NP18</accession>
<accession>Q9NP19</accession>
<accession>Q9NP20</accession>
<accession>Q9NP21</accession>
<accession>Q9NP22</accession>
<accession>Q9NP23</accession>
<accession>Q9NP24</accession>
<accession>Q9UP88</accession>
<gene>
    <name type="primary">COLQ</name>
</gene>
<dbReference type="EMBL" id="AJ225895">
    <property type="protein sequence ID" value="CAA12648.1"/>
    <property type="molecule type" value="mRNA"/>
</dbReference>
<dbReference type="EMBL" id="AF057036">
    <property type="protein sequence ID" value="AAC39927.1"/>
    <property type="molecule type" value="mRNA"/>
</dbReference>
<dbReference type="EMBL" id="AF229126">
    <property type="protein sequence ID" value="AAF43195.1"/>
    <property type="molecule type" value="Genomic_DNA"/>
</dbReference>
<dbReference type="EMBL" id="AF229117">
    <property type="protein sequence ID" value="AAF43195.1"/>
    <property type="status" value="JOINED"/>
    <property type="molecule type" value="Genomic_DNA"/>
</dbReference>
<dbReference type="EMBL" id="AF229118">
    <property type="protein sequence ID" value="AAF43195.1"/>
    <property type="status" value="JOINED"/>
    <property type="molecule type" value="Genomic_DNA"/>
</dbReference>
<dbReference type="EMBL" id="AF229119">
    <property type="protein sequence ID" value="AAF43195.1"/>
    <property type="status" value="JOINED"/>
    <property type="molecule type" value="Genomic_DNA"/>
</dbReference>
<dbReference type="EMBL" id="AF229120">
    <property type="protein sequence ID" value="AAF43195.1"/>
    <property type="status" value="JOINED"/>
    <property type="molecule type" value="Genomic_DNA"/>
</dbReference>
<dbReference type="EMBL" id="AF229121">
    <property type="protein sequence ID" value="AAF43195.1"/>
    <property type="status" value="JOINED"/>
    <property type="molecule type" value="Genomic_DNA"/>
</dbReference>
<dbReference type="EMBL" id="AF229122">
    <property type="protein sequence ID" value="AAF43195.1"/>
    <property type="status" value="JOINED"/>
    <property type="molecule type" value="Genomic_DNA"/>
</dbReference>
<dbReference type="EMBL" id="AF229123">
    <property type="protein sequence ID" value="AAF43195.1"/>
    <property type="status" value="JOINED"/>
    <property type="molecule type" value="Genomic_DNA"/>
</dbReference>
<dbReference type="EMBL" id="AF229124">
    <property type="protein sequence ID" value="AAF43195.1"/>
    <property type="status" value="JOINED"/>
    <property type="molecule type" value="Genomic_DNA"/>
</dbReference>
<dbReference type="EMBL" id="AF229125">
    <property type="protein sequence ID" value="AAF43195.1"/>
    <property type="status" value="JOINED"/>
    <property type="molecule type" value="Genomic_DNA"/>
</dbReference>
<dbReference type="EMBL" id="AF229126">
    <property type="protein sequence ID" value="AAF43196.1"/>
    <property type="molecule type" value="Genomic_DNA"/>
</dbReference>
<dbReference type="EMBL" id="AF229118">
    <property type="protein sequence ID" value="AAF43196.1"/>
    <property type="status" value="JOINED"/>
    <property type="molecule type" value="Genomic_DNA"/>
</dbReference>
<dbReference type="EMBL" id="AF229119">
    <property type="protein sequence ID" value="AAF43196.1"/>
    <property type="status" value="JOINED"/>
    <property type="molecule type" value="Genomic_DNA"/>
</dbReference>
<dbReference type="EMBL" id="AF229120">
    <property type="protein sequence ID" value="AAF43196.1"/>
    <property type="status" value="JOINED"/>
    <property type="molecule type" value="Genomic_DNA"/>
</dbReference>
<dbReference type="EMBL" id="AF229121">
    <property type="protein sequence ID" value="AAF43196.1"/>
    <property type="status" value="JOINED"/>
    <property type="molecule type" value="Genomic_DNA"/>
</dbReference>
<dbReference type="EMBL" id="AF229122">
    <property type="protein sequence ID" value="AAF43196.1"/>
    <property type="status" value="JOINED"/>
    <property type="molecule type" value="Genomic_DNA"/>
</dbReference>
<dbReference type="EMBL" id="AF229123">
    <property type="protein sequence ID" value="AAF43196.1"/>
    <property type="status" value="JOINED"/>
    <property type="molecule type" value="Genomic_DNA"/>
</dbReference>
<dbReference type="EMBL" id="AF229124">
    <property type="protein sequence ID" value="AAF43196.1"/>
    <property type="status" value="JOINED"/>
    <property type="molecule type" value="Genomic_DNA"/>
</dbReference>
<dbReference type="EMBL" id="AF229125">
    <property type="protein sequence ID" value="AAF43196.1"/>
    <property type="status" value="JOINED"/>
    <property type="molecule type" value="Genomic_DNA"/>
</dbReference>
<dbReference type="EMBL" id="AF229126">
    <property type="protein sequence ID" value="AAF43197.1"/>
    <property type="molecule type" value="Genomic_DNA"/>
</dbReference>
<dbReference type="EMBL" id="AF229117">
    <property type="protein sequence ID" value="AAF43197.1"/>
    <property type="status" value="JOINED"/>
    <property type="molecule type" value="Genomic_DNA"/>
</dbReference>
<dbReference type="EMBL" id="AF229118">
    <property type="protein sequence ID" value="AAF43197.1"/>
    <property type="status" value="JOINED"/>
    <property type="molecule type" value="Genomic_DNA"/>
</dbReference>
<dbReference type="EMBL" id="AF229119">
    <property type="protein sequence ID" value="AAF43197.1"/>
    <property type="status" value="JOINED"/>
    <property type="molecule type" value="Genomic_DNA"/>
</dbReference>
<dbReference type="EMBL" id="AF229120">
    <property type="protein sequence ID" value="AAF43197.1"/>
    <property type="status" value="JOINED"/>
    <property type="molecule type" value="Genomic_DNA"/>
</dbReference>
<dbReference type="EMBL" id="AF229121">
    <property type="protein sequence ID" value="AAF43197.1"/>
    <property type="status" value="JOINED"/>
    <property type="molecule type" value="Genomic_DNA"/>
</dbReference>
<dbReference type="EMBL" id="AF229122">
    <property type="protein sequence ID" value="AAF43197.1"/>
    <property type="status" value="JOINED"/>
    <property type="molecule type" value="Genomic_DNA"/>
</dbReference>
<dbReference type="EMBL" id="AF229123">
    <property type="protein sequence ID" value="AAF43197.1"/>
    <property type="status" value="JOINED"/>
    <property type="molecule type" value="Genomic_DNA"/>
</dbReference>
<dbReference type="EMBL" id="AF229124">
    <property type="protein sequence ID" value="AAF43197.1"/>
    <property type="status" value="JOINED"/>
    <property type="molecule type" value="Genomic_DNA"/>
</dbReference>
<dbReference type="EMBL" id="AF229125">
    <property type="protein sequence ID" value="AAF43197.1"/>
    <property type="status" value="JOINED"/>
    <property type="molecule type" value="Genomic_DNA"/>
</dbReference>
<dbReference type="EMBL" id="AF229126">
    <property type="protein sequence ID" value="AAF43198.1"/>
    <property type="molecule type" value="Genomic_DNA"/>
</dbReference>
<dbReference type="EMBL" id="AF229117">
    <property type="protein sequence ID" value="AAF43198.1"/>
    <property type="status" value="JOINED"/>
    <property type="molecule type" value="Genomic_DNA"/>
</dbReference>
<dbReference type="EMBL" id="AF229118">
    <property type="protein sequence ID" value="AAF43198.1"/>
    <property type="status" value="JOINED"/>
    <property type="molecule type" value="Genomic_DNA"/>
</dbReference>
<dbReference type="EMBL" id="AF229119">
    <property type="protein sequence ID" value="AAF43198.1"/>
    <property type="status" value="JOINED"/>
    <property type="molecule type" value="Genomic_DNA"/>
</dbReference>
<dbReference type="EMBL" id="AF229120">
    <property type="protein sequence ID" value="AAF43198.1"/>
    <property type="status" value="JOINED"/>
    <property type="molecule type" value="Genomic_DNA"/>
</dbReference>
<dbReference type="EMBL" id="AF229121">
    <property type="protein sequence ID" value="AAF43198.1"/>
    <property type="status" value="JOINED"/>
    <property type="molecule type" value="Genomic_DNA"/>
</dbReference>
<dbReference type="EMBL" id="AF229122">
    <property type="protein sequence ID" value="AAF43198.1"/>
    <property type="status" value="JOINED"/>
    <property type="molecule type" value="Genomic_DNA"/>
</dbReference>
<dbReference type="EMBL" id="AF229123">
    <property type="protein sequence ID" value="AAF43198.1"/>
    <property type="status" value="JOINED"/>
    <property type="molecule type" value="Genomic_DNA"/>
</dbReference>
<dbReference type="EMBL" id="AF229124">
    <property type="protein sequence ID" value="AAF43198.1"/>
    <property type="status" value="JOINED"/>
    <property type="molecule type" value="Genomic_DNA"/>
</dbReference>
<dbReference type="EMBL" id="AF229125">
    <property type="protein sequence ID" value="AAF43198.1"/>
    <property type="status" value="JOINED"/>
    <property type="molecule type" value="Genomic_DNA"/>
</dbReference>
<dbReference type="EMBL" id="AF229126">
    <property type="protein sequence ID" value="AAF43199.1"/>
    <property type="molecule type" value="Genomic_DNA"/>
</dbReference>
<dbReference type="EMBL" id="AF229117">
    <property type="protein sequence ID" value="AAF43199.1"/>
    <property type="status" value="JOINED"/>
    <property type="molecule type" value="Genomic_DNA"/>
</dbReference>
<dbReference type="EMBL" id="AF229118">
    <property type="protein sequence ID" value="AAF43199.1"/>
    <property type="status" value="JOINED"/>
    <property type="molecule type" value="Genomic_DNA"/>
</dbReference>
<dbReference type="EMBL" id="AF229119">
    <property type="protein sequence ID" value="AAF43199.1"/>
    <property type="status" value="JOINED"/>
    <property type="molecule type" value="Genomic_DNA"/>
</dbReference>
<dbReference type="EMBL" id="AF229120">
    <property type="protein sequence ID" value="AAF43199.1"/>
    <property type="status" value="JOINED"/>
    <property type="molecule type" value="Genomic_DNA"/>
</dbReference>
<dbReference type="EMBL" id="AF229121">
    <property type="protein sequence ID" value="AAF43199.1"/>
    <property type="status" value="JOINED"/>
    <property type="molecule type" value="Genomic_DNA"/>
</dbReference>
<dbReference type="EMBL" id="AF229122">
    <property type="protein sequence ID" value="AAF43199.1"/>
    <property type="status" value="JOINED"/>
    <property type="molecule type" value="Genomic_DNA"/>
</dbReference>
<dbReference type="EMBL" id="AF229123">
    <property type="protein sequence ID" value="AAF43199.1"/>
    <property type="status" value="JOINED"/>
    <property type="molecule type" value="Genomic_DNA"/>
</dbReference>
<dbReference type="EMBL" id="AF229124">
    <property type="protein sequence ID" value="AAF43199.1"/>
    <property type="status" value="JOINED"/>
    <property type="molecule type" value="Genomic_DNA"/>
</dbReference>
<dbReference type="EMBL" id="AF229125">
    <property type="protein sequence ID" value="AAF43199.1"/>
    <property type="status" value="JOINED"/>
    <property type="molecule type" value="Genomic_DNA"/>
</dbReference>
<dbReference type="EMBL" id="AF229122">
    <property type="protein sequence ID" value="AAF43200.1"/>
    <property type="molecule type" value="Genomic_DNA"/>
</dbReference>
<dbReference type="EMBL" id="AF229117">
    <property type="protein sequence ID" value="AAF43200.1"/>
    <property type="status" value="JOINED"/>
    <property type="molecule type" value="Genomic_DNA"/>
</dbReference>
<dbReference type="EMBL" id="AF229118">
    <property type="protein sequence ID" value="AAF43200.1"/>
    <property type="status" value="JOINED"/>
    <property type="molecule type" value="Genomic_DNA"/>
</dbReference>
<dbReference type="EMBL" id="AF229119">
    <property type="protein sequence ID" value="AAF43200.1"/>
    <property type="status" value="JOINED"/>
    <property type="molecule type" value="Genomic_DNA"/>
</dbReference>
<dbReference type="EMBL" id="AF229120">
    <property type="protein sequence ID" value="AAF43200.1"/>
    <property type="status" value="JOINED"/>
    <property type="molecule type" value="Genomic_DNA"/>
</dbReference>
<dbReference type="EMBL" id="AF229121">
    <property type="protein sequence ID" value="AAF43200.1"/>
    <property type="status" value="JOINED"/>
    <property type="molecule type" value="Genomic_DNA"/>
</dbReference>
<dbReference type="EMBL" id="AF229124">
    <property type="protein sequence ID" value="AAF43201.1"/>
    <property type="molecule type" value="Genomic_DNA"/>
</dbReference>
<dbReference type="EMBL" id="AF229117">
    <property type="protein sequence ID" value="AAF43201.1"/>
    <property type="status" value="JOINED"/>
    <property type="molecule type" value="Genomic_DNA"/>
</dbReference>
<dbReference type="EMBL" id="AF229118">
    <property type="protein sequence ID" value="AAF43201.1"/>
    <property type="status" value="JOINED"/>
    <property type="molecule type" value="Genomic_DNA"/>
</dbReference>
<dbReference type="EMBL" id="AF229119">
    <property type="protein sequence ID" value="AAF43201.1"/>
    <property type="status" value="JOINED"/>
    <property type="molecule type" value="Genomic_DNA"/>
</dbReference>
<dbReference type="EMBL" id="AF229120">
    <property type="protein sequence ID" value="AAF43201.1"/>
    <property type="status" value="JOINED"/>
    <property type="molecule type" value="Genomic_DNA"/>
</dbReference>
<dbReference type="EMBL" id="AF229121">
    <property type="protein sequence ID" value="AAF43201.1"/>
    <property type="status" value="JOINED"/>
    <property type="molecule type" value="Genomic_DNA"/>
</dbReference>
<dbReference type="EMBL" id="AF229122">
    <property type="protein sequence ID" value="AAF43201.1"/>
    <property type="status" value="JOINED"/>
    <property type="molecule type" value="Genomic_DNA"/>
</dbReference>
<dbReference type="EMBL" id="AF229126">
    <property type="protein sequence ID" value="AAF43202.1"/>
    <property type="molecule type" value="Genomic_DNA"/>
</dbReference>
<dbReference type="EMBL" id="AF229117">
    <property type="protein sequence ID" value="AAF43202.1"/>
    <property type="status" value="JOINED"/>
    <property type="molecule type" value="Genomic_DNA"/>
</dbReference>
<dbReference type="EMBL" id="AF229118">
    <property type="protein sequence ID" value="AAF43202.1"/>
    <property type="status" value="JOINED"/>
    <property type="molecule type" value="Genomic_DNA"/>
</dbReference>
<dbReference type="EMBL" id="AF229119">
    <property type="protein sequence ID" value="AAF43202.1"/>
    <property type="status" value="JOINED"/>
    <property type="molecule type" value="Genomic_DNA"/>
</dbReference>
<dbReference type="EMBL" id="AF229120">
    <property type="protein sequence ID" value="AAF43202.1"/>
    <property type="status" value="JOINED"/>
    <property type="molecule type" value="Genomic_DNA"/>
</dbReference>
<dbReference type="EMBL" id="AF229121">
    <property type="protein sequence ID" value="AAF43202.1"/>
    <property type="status" value="JOINED"/>
    <property type="molecule type" value="Genomic_DNA"/>
</dbReference>
<dbReference type="EMBL" id="AF229122">
    <property type="protein sequence ID" value="AAF43202.1"/>
    <property type="status" value="JOINED"/>
    <property type="molecule type" value="Genomic_DNA"/>
</dbReference>
<dbReference type="EMBL" id="AY150334">
    <property type="protein sequence ID" value="AAO06814.1"/>
    <property type="molecule type" value="mRNA"/>
</dbReference>
<dbReference type="EMBL" id="AY150336">
    <property type="protein sequence ID" value="AAO06816.1"/>
    <property type="molecule type" value="mRNA"/>
</dbReference>
<dbReference type="EMBL" id="AY150337">
    <property type="protein sequence ID" value="AAO06817.1"/>
    <property type="molecule type" value="mRNA"/>
</dbReference>
<dbReference type="EMBL" id="AY150338">
    <property type="protein sequence ID" value="AAO06818.1"/>
    <property type="molecule type" value="mRNA"/>
</dbReference>
<dbReference type="EMBL" id="AY150339">
    <property type="protein sequence ID" value="AAO06819.1"/>
    <property type="molecule type" value="mRNA"/>
</dbReference>
<dbReference type="EMBL" id="AK128401">
    <property type="protein sequence ID" value="BAG54671.1"/>
    <property type="molecule type" value="mRNA"/>
</dbReference>
<dbReference type="EMBL" id="CH471055">
    <property type="protein sequence ID" value="EAW64250.1"/>
    <property type="molecule type" value="Genomic_DNA"/>
</dbReference>
<dbReference type="EMBL" id="BC074828">
    <property type="protein sequence ID" value="AAH74828.1"/>
    <property type="molecule type" value="mRNA"/>
</dbReference>
<dbReference type="EMBL" id="BC074829">
    <property type="protein sequence ID" value="AAH74829.1"/>
    <property type="molecule type" value="mRNA"/>
</dbReference>
<dbReference type="CCDS" id="CCDS33709.1">
    <molecule id="Q9Y215-1"/>
</dbReference>
<dbReference type="CCDS" id="CCDS43057.1">
    <molecule id="Q9Y215-3"/>
</dbReference>
<dbReference type="CCDS" id="CCDS46768.1">
    <molecule id="Q9Y215-2"/>
</dbReference>
<dbReference type="RefSeq" id="NP_005668.2">
    <molecule id="Q9Y215-1"/>
    <property type="nucleotide sequence ID" value="NM_005677.3"/>
</dbReference>
<dbReference type="RefSeq" id="NP_536799.1">
    <molecule id="Q9Y215-2"/>
    <property type="nucleotide sequence ID" value="NM_080538.2"/>
</dbReference>
<dbReference type="RefSeq" id="NP_536800.2">
    <molecule id="Q9Y215-3"/>
    <property type="nucleotide sequence ID" value="NM_080539.4"/>
</dbReference>
<dbReference type="PDB" id="1VZJ">
    <property type="method" value="X-ray"/>
    <property type="resolution" value="2.35 A"/>
    <property type="chains" value="I/J=53-67"/>
</dbReference>
<dbReference type="PDBsum" id="1VZJ"/>
<dbReference type="SMR" id="Q9Y215"/>
<dbReference type="BioGRID" id="113897">
    <property type="interactions" value="30"/>
</dbReference>
<dbReference type="CORUM" id="Q9Y215"/>
<dbReference type="FunCoup" id="Q9Y215">
    <property type="interactions" value="54"/>
</dbReference>
<dbReference type="IntAct" id="Q9Y215">
    <property type="interactions" value="29"/>
</dbReference>
<dbReference type="STRING" id="9606.ENSP00000373298"/>
<dbReference type="iPTMnet" id="Q9Y215"/>
<dbReference type="PhosphoSitePlus" id="Q9Y215"/>
<dbReference type="BioMuta" id="COLQ"/>
<dbReference type="DMDM" id="116241309"/>
<dbReference type="jPOST" id="Q9Y215"/>
<dbReference type="MassIVE" id="Q9Y215"/>
<dbReference type="PaxDb" id="9606-ENSP00000373298"/>
<dbReference type="PeptideAtlas" id="Q9Y215"/>
<dbReference type="ProteomicsDB" id="85588">
    <molecule id="Q9Y215-6"/>
</dbReference>
<dbReference type="Antibodypedia" id="11101">
    <property type="antibodies" value="152 antibodies from 24 providers"/>
</dbReference>
<dbReference type="DNASU" id="8292"/>
<dbReference type="Ensembl" id="ENST00000383781.8">
    <molecule id="Q9Y215-2"/>
    <property type="protein sequence ID" value="ENSP00000373291.3"/>
    <property type="gene ID" value="ENSG00000206561.14"/>
</dbReference>
<dbReference type="Ensembl" id="ENST00000383786.9">
    <molecule id="Q9Y215-3"/>
    <property type="protein sequence ID" value="ENSP00000373296.3"/>
    <property type="gene ID" value="ENSG00000206561.14"/>
</dbReference>
<dbReference type="Ensembl" id="ENST00000383788.10">
    <molecule id="Q9Y215-1"/>
    <property type="protein sequence ID" value="ENSP00000373298.3"/>
    <property type="gene ID" value="ENSG00000206561.14"/>
</dbReference>
<dbReference type="Ensembl" id="ENST00000681097.1">
    <molecule id="Q9Y215-7"/>
    <property type="protein sequence ID" value="ENSP00000505397.1"/>
    <property type="gene ID" value="ENSG00000206561.14"/>
</dbReference>
<dbReference type="GeneID" id="8292"/>
<dbReference type="KEGG" id="hsa:8292"/>
<dbReference type="MANE-Select" id="ENST00000383788.10">
    <property type="protein sequence ID" value="ENSP00000373298.3"/>
    <property type="RefSeq nucleotide sequence ID" value="NM_005677.4"/>
    <property type="RefSeq protein sequence ID" value="NP_005668.2"/>
</dbReference>
<dbReference type="UCSC" id="uc003bzv.4">
    <molecule id="Q9Y215-1"/>
    <property type="organism name" value="human"/>
</dbReference>
<dbReference type="AGR" id="HGNC:2226"/>
<dbReference type="CTD" id="8292"/>
<dbReference type="DisGeNET" id="8292"/>
<dbReference type="GeneCards" id="COLQ"/>
<dbReference type="GeneReviews" id="COLQ"/>
<dbReference type="HGNC" id="HGNC:2226">
    <property type="gene designation" value="COLQ"/>
</dbReference>
<dbReference type="HPA" id="ENSG00000206561">
    <property type="expression patterns" value="Tissue enhanced (heart)"/>
</dbReference>
<dbReference type="MalaCards" id="COLQ"/>
<dbReference type="MIM" id="603033">
    <property type="type" value="gene"/>
</dbReference>
<dbReference type="MIM" id="603034">
    <property type="type" value="phenotype"/>
</dbReference>
<dbReference type="neXtProt" id="NX_Q9Y215"/>
<dbReference type="OpenTargets" id="ENSG00000206561"/>
<dbReference type="Orphanet" id="98915">
    <property type="disease" value="Synaptic congenital myasthenic syndromes"/>
</dbReference>
<dbReference type="PharmGKB" id="PA26743"/>
<dbReference type="VEuPathDB" id="HostDB:ENSG00000206561"/>
<dbReference type="eggNOG" id="KOG3544">
    <property type="taxonomic scope" value="Eukaryota"/>
</dbReference>
<dbReference type="GeneTree" id="ENSGT00940000157248"/>
<dbReference type="HOGENOM" id="CLU_650464_0_0_1"/>
<dbReference type="InParanoid" id="Q9Y215"/>
<dbReference type="OMA" id="LCLPLWF"/>
<dbReference type="OrthoDB" id="291007at2759"/>
<dbReference type="PAN-GO" id="Q9Y215">
    <property type="GO annotations" value="5 GO annotations based on evolutionary models"/>
</dbReference>
<dbReference type="PhylomeDB" id="Q9Y215"/>
<dbReference type="TreeFam" id="TF331890"/>
<dbReference type="PathwayCommons" id="Q9Y215"/>
<dbReference type="SignaLink" id="Q9Y215"/>
<dbReference type="BioGRID-ORCS" id="8292">
    <property type="hits" value="10 hits in 1147 CRISPR screens"/>
</dbReference>
<dbReference type="ChiTaRS" id="COLQ">
    <property type="organism name" value="human"/>
</dbReference>
<dbReference type="GeneWiki" id="COLQ"/>
<dbReference type="GenomeRNAi" id="8292"/>
<dbReference type="Pharos" id="Q9Y215">
    <property type="development level" value="Tbio"/>
</dbReference>
<dbReference type="PRO" id="PR:Q9Y215"/>
<dbReference type="Proteomes" id="UP000005640">
    <property type="component" value="Chromosome 3"/>
</dbReference>
<dbReference type="RNAct" id="Q9Y215">
    <property type="molecule type" value="protein"/>
</dbReference>
<dbReference type="Bgee" id="ENSG00000206561">
    <property type="expression patterns" value="Expressed in right uterine tube and 107 other cell types or tissues"/>
</dbReference>
<dbReference type="ExpressionAtlas" id="Q9Y215">
    <property type="expression patterns" value="baseline and differential"/>
</dbReference>
<dbReference type="GO" id="GO:0005604">
    <property type="term" value="C:basement membrane"/>
    <property type="evidence" value="ECO:0000304"/>
    <property type="project" value="ProtInc"/>
</dbReference>
<dbReference type="GO" id="GO:0030054">
    <property type="term" value="C:cell junction"/>
    <property type="evidence" value="ECO:0000314"/>
    <property type="project" value="HPA"/>
</dbReference>
<dbReference type="GO" id="GO:0005581">
    <property type="term" value="C:collagen trimer"/>
    <property type="evidence" value="ECO:0007669"/>
    <property type="project" value="UniProtKB-KW"/>
</dbReference>
<dbReference type="GO" id="GO:0062023">
    <property type="term" value="C:collagen-containing extracellular matrix"/>
    <property type="evidence" value="ECO:0007005"/>
    <property type="project" value="BHF-UCL"/>
</dbReference>
<dbReference type="GO" id="GO:0005615">
    <property type="term" value="C:extracellular space"/>
    <property type="evidence" value="ECO:0000318"/>
    <property type="project" value="GO_Central"/>
</dbReference>
<dbReference type="GO" id="GO:0031594">
    <property type="term" value="C:neuromuscular junction"/>
    <property type="evidence" value="ECO:0007669"/>
    <property type="project" value="Ensembl"/>
</dbReference>
<dbReference type="GO" id="GO:0005886">
    <property type="term" value="C:plasma membrane"/>
    <property type="evidence" value="ECO:0000314"/>
    <property type="project" value="HPA"/>
</dbReference>
<dbReference type="GO" id="GO:0043083">
    <property type="term" value="C:synaptic cleft"/>
    <property type="evidence" value="ECO:0007669"/>
    <property type="project" value="GOC"/>
</dbReference>
<dbReference type="GO" id="GO:0030020">
    <property type="term" value="F:extracellular matrix structural constituent conferring tensile strength"/>
    <property type="evidence" value="ECO:0000318"/>
    <property type="project" value="GO_Central"/>
</dbReference>
<dbReference type="GO" id="GO:0008201">
    <property type="term" value="F:heparin binding"/>
    <property type="evidence" value="ECO:0000318"/>
    <property type="project" value="GO_Central"/>
</dbReference>
<dbReference type="GO" id="GO:0001507">
    <property type="term" value="P:acetylcholine catabolic process in synaptic cleft"/>
    <property type="evidence" value="ECO:0000304"/>
    <property type="project" value="ProtInc"/>
</dbReference>
<dbReference type="GO" id="GO:0090150">
    <property type="term" value="P:establishment of protein localization to membrane"/>
    <property type="evidence" value="ECO:0007669"/>
    <property type="project" value="Ensembl"/>
</dbReference>
<dbReference type="GO" id="GO:0008582">
    <property type="term" value="P:regulation of synaptic assembly at neuromuscular junction"/>
    <property type="evidence" value="ECO:0007669"/>
    <property type="project" value="Ensembl"/>
</dbReference>
<dbReference type="GO" id="GO:0071340">
    <property type="term" value="P:skeletal muscle acetylcholine-gated channel clustering"/>
    <property type="evidence" value="ECO:0007669"/>
    <property type="project" value="Ensembl"/>
</dbReference>
<dbReference type="InterPro" id="IPR008160">
    <property type="entry name" value="Collagen"/>
</dbReference>
<dbReference type="InterPro" id="IPR050149">
    <property type="entry name" value="Collagen_superfamily"/>
</dbReference>
<dbReference type="InterPro" id="IPR011936">
    <property type="entry name" value="Myxo_disulph_rpt"/>
</dbReference>
<dbReference type="NCBIfam" id="TIGR02232">
    <property type="entry name" value="myxo_disulf_rpt"/>
    <property type="match status" value="1"/>
</dbReference>
<dbReference type="PANTHER" id="PTHR24023:SF861">
    <property type="entry name" value="ACETYLCHOLINESTERASE COLLAGENIC TAIL PEPTIDE"/>
    <property type="match status" value="1"/>
</dbReference>
<dbReference type="PANTHER" id="PTHR24023">
    <property type="entry name" value="COLLAGEN ALPHA"/>
    <property type="match status" value="1"/>
</dbReference>
<dbReference type="Pfam" id="PF01391">
    <property type="entry name" value="Collagen"/>
    <property type="match status" value="1"/>
</dbReference>
<sequence length="455" mass="47766">MVVLNPMTLGIYLQLFFLSIVSQPTFINSVLPISAALPSLDQKKRGGHKACCLLTPPPPPLFPPPFFRGGRSPLLSPDMKNLMLELETSQSPCMQGSLGSPGPPGPQGPPGLPGKTGPKGEKGELGRPGRKGRPGPPGVPGMPGPIGWPGPEGPRGEKGDLGMMGLPGSRGPMGSKGYPGSRGEKGSRGEKGDLGPKGEKGFPGFPGMLGQKGEMGPKGEPGIAGHRGPTGRPGKRGKQGQKGDSGVMGPPGKPGPSGQPGRPGPPGPPPAGQLIMGPKGERGFPGPPGRCLCGPTMNVNNPSYGESVYGPSSPRVPVIFVVNNQEELERLNTQNAIAFRRDQRSLYFKDSLGWLPIQLTPFYPVDYTADQHGTCGDGLLQPGEECDDGNSDVGDDCIRCHRAYCGDGHRHEGVEDCDGSDFGYLTCETYLPGSYGDLQCTQYCYIDSTPCRYFT</sequence>